<reference key="1">
    <citation type="journal article" date="2000" name="Nature">
        <title>Genome sequence of the endocellular bacterial symbiont of aphids Buchnera sp. APS.</title>
        <authorList>
            <person name="Shigenobu S."/>
            <person name="Watanabe H."/>
            <person name="Hattori M."/>
            <person name="Sakaki Y."/>
            <person name="Ishikawa H."/>
        </authorList>
    </citation>
    <scope>NUCLEOTIDE SEQUENCE [LARGE SCALE GENOMIC DNA]</scope>
    <source>
        <strain>APS</strain>
    </source>
</reference>
<keyword id="KW-0066">ATP synthesis</keyword>
<keyword id="KW-0997">Cell inner membrane</keyword>
<keyword id="KW-1003">Cell membrane</keyword>
<keyword id="KW-0139">CF(1)</keyword>
<keyword id="KW-0375">Hydrogen ion transport</keyword>
<keyword id="KW-0406">Ion transport</keyword>
<keyword id="KW-0472">Membrane</keyword>
<keyword id="KW-1185">Reference proteome</keyword>
<keyword id="KW-0813">Transport</keyword>
<dbReference type="EMBL" id="BA000003">
    <property type="protein sequence ID" value="BAB12735.1"/>
    <property type="molecule type" value="Genomic_DNA"/>
</dbReference>
<dbReference type="RefSeq" id="NP_239849.1">
    <property type="nucleotide sequence ID" value="NC_002528.1"/>
</dbReference>
<dbReference type="RefSeq" id="WP_010895900.1">
    <property type="nucleotide sequence ID" value="NC_002528.1"/>
</dbReference>
<dbReference type="SMR" id="P57123"/>
<dbReference type="STRING" id="563178.BUAP5A_007"/>
<dbReference type="EnsemblBacteria" id="BAB12735">
    <property type="protein sequence ID" value="BAB12735"/>
    <property type="gene ID" value="BAB12735"/>
</dbReference>
<dbReference type="KEGG" id="buc:BU007"/>
<dbReference type="PATRIC" id="fig|107806.10.peg.20"/>
<dbReference type="eggNOG" id="COG0224">
    <property type="taxonomic scope" value="Bacteria"/>
</dbReference>
<dbReference type="HOGENOM" id="CLU_050669_0_1_6"/>
<dbReference type="Proteomes" id="UP000001806">
    <property type="component" value="Chromosome"/>
</dbReference>
<dbReference type="GO" id="GO:0005886">
    <property type="term" value="C:plasma membrane"/>
    <property type="evidence" value="ECO:0007669"/>
    <property type="project" value="UniProtKB-SubCell"/>
</dbReference>
<dbReference type="GO" id="GO:0045259">
    <property type="term" value="C:proton-transporting ATP synthase complex"/>
    <property type="evidence" value="ECO:0007669"/>
    <property type="project" value="UniProtKB-KW"/>
</dbReference>
<dbReference type="GO" id="GO:0005524">
    <property type="term" value="F:ATP binding"/>
    <property type="evidence" value="ECO:0007669"/>
    <property type="project" value="UniProtKB-UniRule"/>
</dbReference>
<dbReference type="GO" id="GO:0046933">
    <property type="term" value="F:proton-transporting ATP synthase activity, rotational mechanism"/>
    <property type="evidence" value="ECO:0007669"/>
    <property type="project" value="UniProtKB-UniRule"/>
</dbReference>
<dbReference type="GO" id="GO:0042777">
    <property type="term" value="P:proton motive force-driven plasma membrane ATP synthesis"/>
    <property type="evidence" value="ECO:0007669"/>
    <property type="project" value="UniProtKB-UniRule"/>
</dbReference>
<dbReference type="CDD" id="cd12151">
    <property type="entry name" value="F1-ATPase_gamma"/>
    <property type="match status" value="1"/>
</dbReference>
<dbReference type="FunFam" id="1.10.287.80:FF:000005">
    <property type="entry name" value="ATP synthase gamma chain"/>
    <property type="match status" value="1"/>
</dbReference>
<dbReference type="Gene3D" id="3.40.1380.10">
    <property type="match status" value="1"/>
</dbReference>
<dbReference type="Gene3D" id="1.10.287.80">
    <property type="entry name" value="ATP synthase, gamma subunit, helix hairpin domain"/>
    <property type="match status" value="1"/>
</dbReference>
<dbReference type="HAMAP" id="MF_00815">
    <property type="entry name" value="ATP_synth_gamma_bact"/>
    <property type="match status" value="1"/>
</dbReference>
<dbReference type="InterPro" id="IPR035968">
    <property type="entry name" value="ATP_synth_F1_ATPase_gsu"/>
</dbReference>
<dbReference type="InterPro" id="IPR000131">
    <property type="entry name" value="ATP_synth_F1_gsu"/>
</dbReference>
<dbReference type="InterPro" id="IPR023632">
    <property type="entry name" value="ATP_synth_F1_gsu_CS"/>
</dbReference>
<dbReference type="NCBIfam" id="TIGR01146">
    <property type="entry name" value="ATPsyn_F1gamma"/>
    <property type="match status" value="1"/>
</dbReference>
<dbReference type="NCBIfam" id="NF004144">
    <property type="entry name" value="PRK05621.1-1"/>
    <property type="match status" value="1"/>
</dbReference>
<dbReference type="PANTHER" id="PTHR11693">
    <property type="entry name" value="ATP SYNTHASE GAMMA CHAIN"/>
    <property type="match status" value="1"/>
</dbReference>
<dbReference type="PANTHER" id="PTHR11693:SF22">
    <property type="entry name" value="ATP SYNTHASE SUBUNIT GAMMA, MITOCHONDRIAL"/>
    <property type="match status" value="1"/>
</dbReference>
<dbReference type="Pfam" id="PF00231">
    <property type="entry name" value="ATP-synt"/>
    <property type="match status" value="1"/>
</dbReference>
<dbReference type="PRINTS" id="PR00126">
    <property type="entry name" value="ATPASEGAMMA"/>
</dbReference>
<dbReference type="SUPFAM" id="SSF52943">
    <property type="entry name" value="ATP synthase (F1-ATPase), gamma subunit"/>
    <property type="match status" value="1"/>
</dbReference>
<dbReference type="PROSITE" id="PS00153">
    <property type="entry name" value="ATPASE_GAMMA"/>
    <property type="match status" value="1"/>
</dbReference>
<sequence length="290" mass="33114">MTSTKEIKNKIVSVTNTKKITKAMEMVAVSKMRKTEERMRSGRPYSDIIRKVIDHVTQGNLEYKHSYLEERKTNRIGMIIISTDRGLCGGLNTNLFKQVLFKIQNFAKVNIPCDLILFGLKSLSVFKLCGSNILAKATNLGENPKLEELINSVGIILQEYQCKRIDKIFIAYNKFHNKMSQYPTITQLLPFSKKNDQDASNNNWDYLYEPESKLILDTLFNRYIESQVYQSILENIASEHAARMIAMKTATDNSGNRIKELQLVYNKVRQANITQELNEIVSGASAVSID</sequence>
<evidence type="ECO:0000255" key="1">
    <source>
        <dbReference type="HAMAP-Rule" id="MF_00815"/>
    </source>
</evidence>
<name>ATPG_BUCAI</name>
<proteinExistence type="inferred from homology"/>
<comment type="function">
    <text evidence="1">Produces ATP from ADP in the presence of a proton gradient across the membrane. The gamma chain is believed to be important in regulating ATPase activity and the flow of protons through the CF(0) complex.</text>
</comment>
<comment type="subunit">
    <text evidence="1">F-type ATPases have 2 components, CF(1) - the catalytic core - and CF(0) - the membrane proton channel. CF(1) has five subunits: alpha(3), beta(3), gamma(1), delta(1), epsilon(1). CF(0) has three main subunits: a, b and c.</text>
</comment>
<comment type="subcellular location">
    <subcellularLocation>
        <location evidence="1">Cell inner membrane</location>
        <topology evidence="1">Peripheral membrane protein</topology>
    </subcellularLocation>
</comment>
<comment type="similarity">
    <text evidence="1">Belongs to the ATPase gamma chain family.</text>
</comment>
<gene>
    <name evidence="1" type="primary">atpG</name>
    <name type="ordered locus">BU007</name>
</gene>
<protein>
    <recommendedName>
        <fullName evidence="1">ATP synthase gamma chain</fullName>
    </recommendedName>
    <alternativeName>
        <fullName evidence="1">ATP synthase F1 sector gamma subunit</fullName>
    </alternativeName>
    <alternativeName>
        <fullName evidence="1">F-ATPase gamma subunit</fullName>
    </alternativeName>
</protein>
<accession>P57123</accession>
<feature type="chain" id="PRO_0000073252" description="ATP synthase gamma chain">
    <location>
        <begin position="1"/>
        <end position="290"/>
    </location>
</feature>
<organism>
    <name type="scientific">Buchnera aphidicola subsp. Acyrthosiphon pisum (strain APS)</name>
    <name type="common">Acyrthosiphon pisum symbiotic bacterium</name>
    <dbReference type="NCBI Taxonomy" id="107806"/>
    <lineage>
        <taxon>Bacteria</taxon>
        <taxon>Pseudomonadati</taxon>
        <taxon>Pseudomonadota</taxon>
        <taxon>Gammaproteobacteria</taxon>
        <taxon>Enterobacterales</taxon>
        <taxon>Erwiniaceae</taxon>
        <taxon>Buchnera</taxon>
    </lineage>
</organism>